<feature type="chain" id="PRO_1000165917" description="Large ribosomal subunit protein uL24">
    <location>
        <begin position="1"/>
        <end position="106"/>
    </location>
</feature>
<proteinExistence type="inferred from homology"/>
<reference key="1">
    <citation type="submission" date="2008-08" db="EMBL/GenBank/DDBJ databases">
        <title>Complete sequence of Acidithiobacillus ferrooxidans ATCC 53993.</title>
        <authorList>
            <person name="Lucas S."/>
            <person name="Copeland A."/>
            <person name="Lapidus A."/>
            <person name="Glavina del Rio T."/>
            <person name="Dalin E."/>
            <person name="Tice H."/>
            <person name="Bruce D."/>
            <person name="Goodwin L."/>
            <person name="Pitluck S."/>
            <person name="Sims D."/>
            <person name="Brettin T."/>
            <person name="Detter J.C."/>
            <person name="Han C."/>
            <person name="Kuske C.R."/>
            <person name="Larimer F."/>
            <person name="Land M."/>
            <person name="Hauser L."/>
            <person name="Kyrpides N."/>
            <person name="Lykidis A."/>
            <person name="Borole A.P."/>
        </authorList>
    </citation>
    <scope>NUCLEOTIDE SEQUENCE [LARGE SCALE GENOMIC DNA]</scope>
    <source>
        <strain>ATCC 53993 / BNL-5-31</strain>
    </source>
</reference>
<protein>
    <recommendedName>
        <fullName evidence="1">Large ribosomal subunit protein uL24</fullName>
    </recommendedName>
    <alternativeName>
        <fullName evidence="2">50S ribosomal protein L24</fullName>
    </alternativeName>
</protein>
<evidence type="ECO:0000255" key="1">
    <source>
        <dbReference type="HAMAP-Rule" id="MF_01326"/>
    </source>
</evidence>
<evidence type="ECO:0000305" key="2"/>
<name>RL24_ACIF5</name>
<dbReference type="EMBL" id="CP001132">
    <property type="protein sequence ID" value="ACH82762.1"/>
    <property type="molecule type" value="Genomic_DNA"/>
</dbReference>
<dbReference type="RefSeq" id="WP_009569556.1">
    <property type="nucleotide sequence ID" value="NC_011206.1"/>
</dbReference>
<dbReference type="SMR" id="B5ELZ0"/>
<dbReference type="GeneID" id="65279717"/>
<dbReference type="KEGG" id="afe:Lferr_0508"/>
<dbReference type="eggNOG" id="COG0198">
    <property type="taxonomic scope" value="Bacteria"/>
</dbReference>
<dbReference type="HOGENOM" id="CLU_093315_2_2_6"/>
<dbReference type="GO" id="GO:1990904">
    <property type="term" value="C:ribonucleoprotein complex"/>
    <property type="evidence" value="ECO:0007669"/>
    <property type="project" value="UniProtKB-KW"/>
</dbReference>
<dbReference type="GO" id="GO:0005840">
    <property type="term" value="C:ribosome"/>
    <property type="evidence" value="ECO:0007669"/>
    <property type="project" value="UniProtKB-KW"/>
</dbReference>
<dbReference type="GO" id="GO:0019843">
    <property type="term" value="F:rRNA binding"/>
    <property type="evidence" value="ECO:0007669"/>
    <property type="project" value="UniProtKB-UniRule"/>
</dbReference>
<dbReference type="GO" id="GO:0003735">
    <property type="term" value="F:structural constituent of ribosome"/>
    <property type="evidence" value="ECO:0007669"/>
    <property type="project" value="InterPro"/>
</dbReference>
<dbReference type="GO" id="GO:0006412">
    <property type="term" value="P:translation"/>
    <property type="evidence" value="ECO:0007669"/>
    <property type="project" value="UniProtKB-UniRule"/>
</dbReference>
<dbReference type="CDD" id="cd06089">
    <property type="entry name" value="KOW_RPL26"/>
    <property type="match status" value="1"/>
</dbReference>
<dbReference type="FunFam" id="2.30.30.30:FF:000004">
    <property type="entry name" value="50S ribosomal protein L24"/>
    <property type="match status" value="1"/>
</dbReference>
<dbReference type="Gene3D" id="2.30.30.30">
    <property type="match status" value="1"/>
</dbReference>
<dbReference type="HAMAP" id="MF_01326_B">
    <property type="entry name" value="Ribosomal_uL24_B"/>
    <property type="match status" value="1"/>
</dbReference>
<dbReference type="InterPro" id="IPR005824">
    <property type="entry name" value="KOW"/>
</dbReference>
<dbReference type="InterPro" id="IPR014722">
    <property type="entry name" value="Rib_uL2_dom2"/>
</dbReference>
<dbReference type="InterPro" id="IPR003256">
    <property type="entry name" value="Ribosomal_uL24"/>
</dbReference>
<dbReference type="InterPro" id="IPR005825">
    <property type="entry name" value="Ribosomal_uL24_CS"/>
</dbReference>
<dbReference type="InterPro" id="IPR041988">
    <property type="entry name" value="Ribosomal_uL24_KOW"/>
</dbReference>
<dbReference type="InterPro" id="IPR008991">
    <property type="entry name" value="Translation_prot_SH3-like_sf"/>
</dbReference>
<dbReference type="NCBIfam" id="TIGR01079">
    <property type="entry name" value="rplX_bact"/>
    <property type="match status" value="1"/>
</dbReference>
<dbReference type="PANTHER" id="PTHR12903">
    <property type="entry name" value="MITOCHONDRIAL RIBOSOMAL PROTEIN L24"/>
    <property type="match status" value="1"/>
</dbReference>
<dbReference type="Pfam" id="PF00467">
    <property type="entry name" value="KOW"/>
    <property type="match status" value="1"/>
</dbReference>
<dbReference type="Pfam" id="PF17136">
    <property type="entry name" value="ribosomal_L24"/>
    <property type="match status" value="1"/>
</dbReference>
<dbReference type="SMART" id="SM00739">
    <property type="entry name" value="KOW"/>
    <property type="match status" value="1"/>
</dbReference>
<dbReference type="SUPFAM" id="SSF50104">
    <property type="entry name" value="Translation proteins SH3-like domain"/>
    <property type="match status" value="1"/>
</dbReference>
<dbReference type="PROSITE" id="PS01108">
    <property type="entry name" value="RIBOSOMAL_L24"/>
    <property type="match status" value="1"/>
</dbReference>
<gene>
    <name evidence="1" type="primary">rplX</name>
    <name type="ordered locus">Lferr_0508</name>
</gene>
<accession>B5ELZ0</accession>
<keyword id="KW-0687">Ribonucleoprotein</keyword>
<keyword id="KW-0689">Ribosomal protein</keyword>
<keyword id="KW-0694">RNA-binding</keyword>
<keyword id="KW-0699">rRNA-binding</keyword>
<organism>
    <name type="scientific">Acidithiobacillus ferrooxidans (strain ATCC 53993 / BNL-5-31)</name>
    <name type="common">Leptospirillum ferrooxidans (ATCC 53993)</name>
    <dbReference type="NCBI Taxonomy" id="380394"/>
    <lineage>
        <taxon>Bacteria</taxon>
        <taxon>Pseudomonadati</taxon>
        <taxon>Pseudomonadota</taxon>
        <taxon>Acidithiobacillia</taxon>
        <taxon>Acidithiobacillales</taxon>
        <taxon>Acidithiobacillaceae</taxon>
        <taxon>Acidithiobacillus</taxon>
    </lineage>
</organism>
<comment type="function">
    <text evidence="1">One of two assembly initiator proteins, it binds directly to the 5'-end of the 23S rRNA, where it nucleates assembly of the 50S subunit.</text>
</comment>
<comment type="function">
    <text evidence="1">One of the proteins that surrounds the polypeptide exit tunnel on the outside of the subunit.</text>
</comment>
<comment type="subunit">
    <text evidence="1">Part of the 50S ribosomal subunit.</text>
</comment>
<comment type="similarity">
    <text evidence="1">Belongs to the universal ribosomal protein uL24 family.</text>
</comment>
<sequence length="106" mass="11718">MLKVRKDDEVVVLAGKDKGKRGKVLKVLREDSRVLVEKVNMIKRHVRPDRMGKAGGIVEKEAPIHVSNVAIFNAATGGGDRIGYKVLEDGQKVRVFKSNGEVIGRR</sequence>